<dbReference type="EC" id="2.5.1.78" evidence="1"/>
<dbReference type="EMBL" id="AM849034">
    <property type="protein sequence ID" value="CAQ02950.1"/>
    <property type="molecule type" value="Genomic_DNA"/>
</dbReference>
<dbReference type="RefSeq" id="WP_012300106.1">
    <property type="nucleotide sequence ID" value="NC_010407.1"/>
</dbReference>
<dbReference type="SMR" id="B0RC64"/>
<dbReference type="STRING" id="31964.CMS2879"/>
<dbReference type="KEGG" id="cms:CMS2879"/>
<dbReference type="eggNOG" id="COG0054">
    <property type="taxonomic scope" value="Bacteria"/>
</dbReference>
<dbReference type="HOGENOM" id="CLU_089358_1_2_11"/>
<dbReference type="OrthoDB" id="9809709at2"/>
<dbReference type="UniPathway" id="UPA00275">
    <property type="reaction ID" value="UER00404"/>
</dbReference>
<dbReference type="Proteomes" id="UP000001318">
    <property type="component" value="Chromosome"/>
</dbReference>
<dbReference type="GO" id="GO:0005829">
    <property type="term" value="C:cytosol"/>
    <property type="evidence" value="ECO:0007669"/>
    <property type="project" value="TreeGrafter"/>
</dbReference>
<dbReference type="GO" id="GO:0009349">
    <property type="term" value="C:riboflavin synthase complex"/>
    <property type="evidence" value="ECO:0007669"/>
    <property type="project" value="InterPro"/>
</dbReference>
<dbReference type="GO" id="GO:0000906">
    <property type="term" value="F:6,7-dimethyl-8-ribityllumazine synthase activity"/>
    <property type="evidence" value="ECO:0007669"/>
    <property type="project" value="UniProtKB-UniRule"/>
</dbReference>
<dbReference type="GO" id="GO:0009231">
    <property type="term" value="P:riboflavin biosynthetic process"/>
    <property type="evidence" value="ECO:0007669"/>
    <property type="project" value="UniProtKB-UniRule"/>
</dbReference>
<dbReference type="CDD" id="cd09209">
    <property type="entry name" value="Lumazine_synthase-I"/>
    <property type="match status" value="1"/>
</dbReference>
<dbReference type="Gene3D" id="3.40.50.960">
    <property type="entry name" value="Lumazine/riboflavin synthase"/>
    <property type="match status" value="1"/>
</dbReference>
<dbReference type="HAMAP" id="MF_00178">
    <property type="entry name" value="Lumazine_synth"/>
    <property type="match status" value="1"/>
</dbReference>
<dbReference type="InterPro" id="IPR034964">
    <property type="entry name" value="LS"/>
</dbReference>
<dbReference type="InterPro" id="IPR002180">
    <property type="entry name" value="LS/RS"/>
</dbReference>
<dbReference type="InterPro" id="IPR036467">
    <property type="entry name" value="LS/RS_sf"/>
</dbReference>
<dbReference type="NCBIfam" id="TIGR00114">
    <property type="entry name" value="lumazine-synth"/>
    <property type="match status" value="1"/>
</dbReference>
<dbReference type="PANTHER" id="PTHR21058:SF0">
    <property type="entry name" value="6,7-DIMETHYL-8-RIBITYLLUMAZINE SYNTHASE"/>
    <property type="match status" value="1"/>
</dbReference>
<dbReference type="PANTHER" id="PTHR21058">
    <property type="entry name" value="6,7-DIMETHYL-8-RIBITYLLUMAZINE SYNTHASE DMRL SYNTHASE LUMAZINE SYNTHASE"/>
    <property type="match status" value="1"/>
</dbReference>
<dbReference type="Pfam" id="PF00885">
    <property type="entry name" value="DMRL_synthase"/>
    <property type="match status" value="1"/>
</dbReference>
<dbReference type="SUPFAM" id="SSF52121">
    <property type="entry name" value="Lumazine synthase"/>
    <property type="match status" value="1"/>
</dbReference>
<accession>B0RC64</accession>
<comment type="function">
    <text evidence="1">Catalyzes the formation of 6,7-dimethyl-8-ribityllumazine by condensation of 5-amino-6-(D-ribitylamino)uracil with 3,4-dihydroxy-2-butanone 4-phosphate. This is the penultimate step in the biosynthesis of riboflavin.</text>
</comment>
<comment type="catalytic activity">
    <reaction evidence="1">
        <text>(2S)-2-hydroxy-3-oxobutyl phosphate + 5-amino-6-(D-ribitylamino)uracil = 6,7-dimethyl-8-(1-D-ribityl)lumazine + phosphate + 2 H2O + H(+)</text>
        <dbReference type="Rhea" id="RHEA:26152"/>
        <dbReference type="ChEBI" id="CHEBI:15377"/>
        <dbReference type="ChEBI" id="CHEBI:15378"/>
        <dbReference type="ChEBI" id="CHEBI:15934"/>
        <dbReference type="ChEBI" id="CHEBI:43474"/>
        <dbReference type="ChEBI" id="CHEBI:58201"/>
        <dbReference type="ChEBI" id="CHEBI:58830"/>
        <dbReference type="EC" id="2.5.1.78"/>
    </reaction>
</comment>
<comment type="pathway">
    <text evidence="1">Cofactor biosynthesis; riboflavin biosynthesis; riboflavin from 2-hydroxy-3-oxobutyl phosphate and 5-amino-6-(D-ribitylamino)uracil: step 1/2.</text>
</comment>
<comment type="similarity">
    <text evidence="1">Belongs to the DMRL synthase family.</text>
</comment>
<organism>
    <name type="scientific">Clavibacter sepedonicus</name>
    <name type="common">Clavibacter michiganensis subsp. sepedonicus</name>
    <dbReference type="NCBI Taxonomy" id="31964"/>
    <lineage>
        <taxon>Bacteria</taxon>
        <taxon>Bacillati</taxon>
        <taxon>Actinomycetota</taxon>
        <taxon>Actinomycetes</taxon>
        <taxon>Micrococcales</taxon>
        <taxon>Microbacteriaceae</taxon>
        <taxon>Clavibacter</taxon>
    </lineage>
</organism>
<gene>
    <name evidence="1" type="primary">ribH</name>
    <name type="ordered locus">CMS2879</name>
</gene>
<name>RISB_CLASE</name>
<feature type="chain" id="PRO_1000077228" description="6,7-dimethyl-8-ribityllumazine synthase">
    <location>
        <begin position="1"/>
        <end position="160"/>
    </location>
</feature>
<feature type="active site" description="Proton donor" evidence="1">
    <location>
        <position position="90"/>
    </location>
</feature>
<feature type="binding site" evidence="1">
    <location>
        <position position="28"/>
    </location>
    <ligand>
        <name>5-amino-6-(D-ribitylamino)uracil</name>
        <dbReference type="ChEBI" id="CHEBI:15934"/>
    </ligand>
</feature>
<feature type="binding site" evidence="1">
    <location>
        <begin position="59"/>
        <end position="61"/>
    </location>
    <ligand>
        <name>5-amino-6-(D-ribitylamino)uracil</name>
        <dbReference type="ChEBI" id="CHEBI:15934"/>
    </ligand>
</feature>
<feature type="binding site" evidence="1">
    <location>
        <begin position="82"/>
        <end position="84"/>
    </location>
    <ligand>
        <name>5-amino-6-(D-ribitylamino)uracil</name>
        <dbReference type="ChEBI" id="CHEBI:15934"/>
    </ligand>
</feature>
<feature type="binding site" evidence="1">
    <location>
        <begin position="87"/>
        <end position="88"/>
    </location>
    <ligand>
        <name>(2S)-2-hydroxy-3-oxobutyl phosphate</name>
        <dbReference type="ChEBI" id="CHEBI:58830"/>
    </ligand>
</feature>
<feature type="binding site" evidence="1">
    <location>
        <position position="115"/>
    </location>
    <ligand>
        <name>5-amino-6-(D-ribitylamino)uracil</name>
        <dbReference type="ChEBI" id="CHEBI:15934"/>
    </ligand>
</feature>
<feature type="binding site" evidence="1">
    <location>
        <position position="129"/>
    </location>
    <ligand>
        <name>(2S)-2-hydroxy-3-oxobutyl phosphate</name>
        <dbReference type="ChEBI" id="CHEBI:58830"/>
    </ligand>
</feature>
<protein>
    <recommendedName>
        <fullName evidence="1">6,7-dimethyl-8-ribityllumazine synthase</fullName>
        <shortName evidence="1">DMRL synthase</shortName>
        <shortName evidence="1">LS</shortName>
        <shortName evidence="1">Lumazine synthase</shortName>
        <ecNumber evidence="1">2.5.1.78</ecNumber>
    </recommendedName>
</protein>
<keyword id="KW-0686">Riboflavin biosynthesis</keyword>
<keyword id="KW-0808">Transferase</keyword>
<proteinExistence type="inferred from homology"/>
<evidence type="ECO:0000255" key="1">
    <source>
        <dbReference type="HAMAP-Rule" id="MF_00178"/>
    </source>
</evidence>
<sequence length="160" mass="15992">MSGHGAPEIDPTALDGTGLAVTVVAGRWHDEISAGLLAGAQRVLDAAGVTTTVIRVPGSFELPVVARAALDAGADAVVALGVIIRGGTPHFEYVSDAATSGLTQASLLTGKPVGFGLLTLDDEQQGLDRAGLPDSKEDKGAEAAEAAVTTALLLKAIRGA</sequence>
<reference key="1">
    <citation type="journal article" date="2008" name="J. Bacteriol.">
        <title>Genome of the actinomycete plant pathogen Clavibacter michiganensis subsp. sepedonicus suggests recent niche adaptation.</title>
        <authorList>
            <person name="Bentley S.D."/>
            <person name="Corton C."/>
            <person name="Brown S.E."/>
            <person name="Barron A."/>
            <person name="Clark L."/>
            <person name="Doggett J."/>
            <person name="Harris B."/>
            <person name="Ormond D."/>
            <person name="Quail M.A."/>
            <person name="May G."/>
            <person name="Francis D."/>
            <person name="Knudson D."/>
            <person name="Parkhill J."/>
            <person name="Ishimaru C.A."/>
        </authorList>
    </citation>
    <scope>NUCLEOTIDE SEQUENCE [LARGE SCALE GENOMIC DNA]</scope>
    <source>
        <strain>ATCC 33113 / DSM 20744 / JCM 9667 / LMG 2889 / ICMP 2535 / C-1</strain>
    </source>
</reference>